<organism>
    <name type="scientific">Haloferax volcanii (strain ATCC 29605 / DSM 3757 / JCM 8879 / NBRC 14742 / NCIMB 2012 / VKM B-1768 / DS2)</name>
    <name type="common">Halobacterium volcanii</name>
    <dbReference type="NCBI Taxonomy" id="309800"/>
    <lineage>
        <taxon>Archaea</taxon>
        <taxon>Methanobacteriati</taxon>
        <taxon>Methanobacteriota</taxon>
        <taxon>Stenosarchaea group</taxon>
        <taxon>Halobacteria</taxon>
        <taxon>Halobacteriales</taxon>
        <taxon>Haloferacaceae</taxon>
        <taxon>Haloferax</taxon>
    </lineage>
</organism>
<proteinExistence type="inferred from homology"/>
<protein>
    <recommendedName>
        <fullName>Tryptophan synthase beta chain</fullName>
        <ecNumber>4.2.1.20</ecNumber>
    </recommendedName>
</protein>
<reference key="1">
    <citation type="journal article" date="1990" name="Proc. Natl. Acad. Sci. U.S.A.">
        <title>Genes for tryptophan biosynthesis in the archaebacterium Haloferax volcanii.</title>
        <authorList>
            <person name="Lam W.L."/>
            <person name="Cohen A."/>
            <person name="Tsouluhas D."/>
            <person name="Doolittle W.F."/>
        </authorList>
    </citation>
    <scope>NUCLEOTIDE SEQUENCE [GENOMIC DNA]</scope>
    <source>
        <strain>DS2 / DSM 5716 / WFD11</strain>
    </source>
</reference>
<reference key="2">
    <citation type="journal article" date="2010" name="PLoS ONE">
        <title>The complete genome sequence of Haloferax volcanii DS2, a model archaeon.</title>
        <authorList>
            <person name="Hartman A.L."/>
            <person name="Norais C."/>
            <person name="Badger J.H."/>
            <person name="Delmas S."/>
            <person name="Haldenby S."/>
            <person name="Madupu R."/>
            <person name="Robinson J."/>
            <person name="Khouri H."/>
            <person name="Ren Q."/>
            <person name="Lowe T.M."/>
            <person name="Maupin-Furlow J."/>
            <person name="Pohlschroder M."/>
            <person name="Daniels C."/>
            <person name="Pfeiffer F."/>
            <person name="Allers T."/>
            <person name="Eisen J.A."/>
        </authorList>
    </citation>
    <scope>NUCLEOTIDE SEQUENCE [LARGE SCALE GENOMIC DNA]</scope>
    <source>
        <strain>ATCC 29605 / DSM 3757 / JCM 8879 / NBRC 14742 / NCIMB 2012 / VKM B-1768 / DS2</strain>
    </source>
</reference>
<accession>P18285</accession>
<accession>D4GU17</accession>
<keyword id="KW-0028">Amino-acid biosynthesis</keyword>
<keyword id="KW-0057">Aromatic amino acid biosynthesis</keyword>
<keyword id="KW-0456">Lyase</keyword>
<keyword id="KW-0663">Pyridoxal phosphate</keyword>
<keyword id="KW-1185">Reference proteome</keyword>
<keyword id="KW-0822">Tryptophan biosynthesis</keyword>
<comment type="function">
    <text evidence="1">The beta subunit is responsible for the synthesis of L-tryptophan from indole and L-serine.</text>
</comment>
<comment type="catalytic activity">
    <reaction>
        <text>(1S,2R)-1-C-(indol-3-yl)glycerol 3-phosphate + L-serine = D-glyceraldehyde 3-phosphate + L-tryptophan + H2O</text>
        <dbReference type="Rhea" id="RHEA:10532"/>
        <dbReference type="ChEBI" id="CHEBI:15377"/>
        <dbReference type="ChEBI" id="CHEBI:33384"/>
        <dbReference type="ChEBI" id="CHEBI:57912"/>
        <dbReference type="ChEBI" id="CHEBI:58866"/>
        <dbReference type="ChEBI" id="CHEBI:59776"/>
        <dbReference type="EC" id="4.2.1.20"/>
    </reaction>
</comment>
<comment type="cofactor">
    <cofactor evidence="1">
        <name>pyridoxal 5'-phosphate</name>
        <dbReference type="ChEBI" id="CHEBI:597326"/>
    </cofactor>
</comment>
<comment type="pathway">
    <text>Amino-acid biosynthesis; L-tryptophan biosynthesis; L-tryptophan from chorismate: step 5/5.</text>
</comment>
<comment type="subunit">
    <text evidence="1">Tetramer of two alpha and two beta chains.</text>
</comment>
<comment type="similarity">
    <text evidence="2">Belongs to the TrpB family.</text>
</comment>
<evidence type="ECO:0000250" key="1"/>
<evidence type="ECO:0000305" key="2"/>
<dbReference type="EC" id="4.2.1.20"/>
<dbReference type="EMBL" id="M36177">
    <property type="protein sequence ID" value="AAA72863.1"/>
    <property type="molecule type" value="Genomic_DNA"/>
</dbReference>
<dbReference type="EMBL" id="CP001956">
    <property type="protein sequence ID" value="ADE02680.1"/>
    <property type="molecule type" value="Genomic_DNA"/>
</dbReference>
<dbReference type="PIR" id="B36044">
    <property type="entry name" value="B36044"/>
</dbReference>
<dbReference type="RefSeq" id="WP_004044149.1">
    <property type="nucleotide sequence ID" value="NC_013967.1"/>
</dbReference>
<dbReference type="SMR" id="P18285"/>
<dbReference type="STRING" id="309800.HVO_0788"/>
<dbReference type="PaxDb" id="309800-C498_14793"/>
<dbReference type="EnsemblBacteria" id="ADE02680">
    <property type="protein sequence ID" value="ADE02680"/>
    <property type="gene ID" value="HVO_0788"/>
</dbReference>
<dbReference type="GeneID" id="8924730"/>
<dbReference type="KEGG" id="hvo:HVO_0788"/>
<dbReference type="eggNOG" id="arCOG01433">
    <property type="taxonomic scope" value="Archaea"/>
</dbReference>
<dbReference type="HOGENOM" id="CLU_016734_3_1_2"/>
<dbReference type="OrthoDB" id="371827at2157"/>
<dbReference type="UniPathway" id="UPA00035">
    <property type="reaction ID" value="UER00044"/>
</dbReference>
<dbReference type="Proteomes" id="UP000008243">
    <property type="component" value="Chromosome"/>
</dbReference>
<dbReference type="GO" id="GO:0005737">
    <property type="term" value="C:cytoplasm"/>
    <property type="evidence" value="ECO:0007669"/>
    <property type="project" value="TreeGrafter"/>
</dbReference>
<dbReference type="GO" id="GO:0004834">
    <property type="term" value="F:tryptophan synthase activity"/>
    <property type="evidence" value="ECO:0007669"/>
    <property type="project" value="UniProtKB-UniRule"/>
</dbReference>
<dbReference type="CDD" id="cd06446">
    <property type="entry name" value="Trp-synth_B"/>
    <property type="match status" value="1"/>
</dbReference>
<dbReference type="FunFam" id="3.40.50.1100:FF:000001">
    <property type="entry name" value="Tryptophan synthase beta chain"/>
    <property type="match status" value="1"/>
</dbReference>
<dbReference type="FunFam" id="3.40.50.1100:FF:000004">
    <property type="entry name" value="Tryptophan synthase beta chain"/>
    <property type="match status" value="1"/>
</dbReference>
<dbReference type="Gene3D" id="3.40.50.1100">
    <property type="match status" value="2"/>
</dbReference>
<dbReference type="HAMAP" id="MF_00133">
    <property type="entry name" value="Trp_synth_beta"/>
    <property type="match status" value="1"/>
</dbReference>
<dbReference type="InterPro" id="IPR006653">
    <property type="entry name" value="Trp_synth_b_CS"/>
</dbReference>
<dbReference type="InterPro" id="IPR006654">
    <property type="entry name" value="Trp_synth_beta"/>
</dbReference>
<dbReference type="InterPro" id="IPR023026">
    <property type="entry name" value="Trp_synth_beta/beta-like"/>
</dbReference>
<dbReference type="InterPro" id="IPR001926">
    <property type="entry name" value="TrpB-like_PALP"/>
</dbReference>
<dbReference type="InterPro" id="IPR036052">
    <property type="entry name" value="TrpB-like_PALP_sf"/>
</dbReference>
<dbReference type="NCBIfam" id="TIGR00263">
    <property type="entry name" value="trpB"/>
    <property type="match status" value="1"/>
</dbReference>
<dbReference type="PANTHER" id="PTHR48077:SF3">
    <property type="entry name" value="TRYPTOPHAN SYNTHASE"/>
    <property type="match status" value="1"/>
</dbReference>
<dbReference type="PANTHER" id="PTHR48077">
    <property type="entry name" value="TRYPTOPHAN SYNTHASE-RELATED"/>
    <property type="match status" value="1"/>
</dbReference>
<dbReference type="Pfam" id="PF00291">
    <property type="entry name" value="PALP"/>
    <property type="match status" value="1"/>
</dbReference>
<dbReference type="PIRSF" id="PIRSF001413">
    <property type="entry name" value="Trp_syn_beta"/>
    <property type="match status" value="1"/>
</dbReference>
<dbReference type="SUPFAM" id="SSF53686">
    <property type="entry name" value="Tryptophan synthase beta subunit-like PLP-dependent enzymes"/>
    <property type="match status" value="1"/>
</dbReference>
<dbReference type="PROSITE" id="PS00168">
    <property type="entry name" value="TRP_SYNTHASE_BETA"/>
    <property type="match status" value="1"/>
</dbReference>
<sequence length="422" mass="45711">MSADGKFGDYGGQYVPEALMPAIEELTDAYERYVLDNEDGFMDDFRARLRDFGGRPTPLQRADRLSERYDREVYLKREDLLHGGAHKLNNALGQVLLAKYMGKERIIAETGAGQHGTATAMACAHLDMPCEIYMGERDINRQRPNVFRMKLNGSEVNPVTVGRGTLKEAISETMRDWATNVEDTHYVIGSVVGPHPFPSMVRDFQSVISEEARTQAREKLGRLPDAVVACAGGGSNTMGAFAEFVDDEETALYAVEAGGSTLEVDEEAGVAPNSASLTTGSEGILHGARTRLLQDRDGQIMESHSVSSGLDYAGVGPELAHLVDTGRVTAVNVDDDAALTAFHRLSQMEGIIPALESAHAFGYLESVVGPDAPDAENADDLGEYVVVNVSGRGDKDLESAIEETYERDIDIAPNMDEFTGGL</sequence>
<gene>
    <name type="primary">trpB</name>
    <name type="ordered locus">HVO_0788</name>
</gene>
<feature type="chain" id="PRO_0000099035" description="Tryptophan synthase beta chain">
    <location>
        <begin position="1"/>
        <end position="422"/>
    </location>
</feature>
<feature type="modified residue" description="N6-(pyridoxal phosphate)lysine" evidence="1">
    <location>
        <position position="87"/>
    </location>
</feature>
<feature type="sequence conflict" description="In Ref. 1; AAA72863." evidence="2" ref="1">
    <original>A</original>
    <variation>E</variation>
    <location>
        <position position="178"/>
    </location>
</feature>
<feature type="sequence conflict" description="In Ref. 1; AAA72863." evidence="2" ref="1">
    <original>SVV</original>
    <variation>VWSS</variation>
    <location>
        <begin position="366"/>
        <end position="368"/>
    </location>
</feature>
<name>TRPB_HALVD</name>